<name>CALM_AJECG</name>
<dbReference type="EMBL" id="U12505">
    <property type="protein sequence ID" value="AAB50268.1"/>
    <property type="molecule type" value="mRNA"/>
</dbReference>
<dbReference type="EMBL" id="AF072882">
    <property type="protein sequence ID" value="AAC27509.1"/>
    <property type="molecule type" value="Genomic_DNA"/>
</dbReference>
<dbReference type="EMBL" id="GG663376">
    <property type="protein sequence ID" value="EEH03701.1"/>
    <property type="molecule type" value="Genomic_DNA"/>
</dbReference>
<dbReference type="SMR" id="P60206"/>
<dbReference type="FunCoup" id="P60206">
    <property type="interactions" value="702"/>
</dbReference>
<dbReference type="STRING" id="447093.P60206"/>
<dbReference type="VEuPathDB" id="FungiDB:I7I50_04224"/>
<dbReference type="HOGENOM" id="CLU_061288_2_0_1"/>
<dbReference type="InParanoid" id="P60206"/>
<dbReference type="Proteomes" id="UP000001631">
    <property type="component" value="Unassembled WGS sequence"/>
</dbReference>
<dbReference type="GO" id="GO:0016460">
    <property type="term" value="C:myosin II complex"/>
    <property type="evidence" value="ECO:0007669"/>
    <property type="project" value="TreeGrafter"/>
</dbReference>
<dbReference type="GO" id="GO:0005509">
    <property type="term" value="F:calcium ion binding"/>
    <property type="evidence" value="ECO:0007669"/>
    <property type="project" value="InterPro"/>
</dbReference>
<dbReference type="CDD" id="cd00051">
    <property type="entry name" value="EFh"/>
    <property type="match status" value="1"/>
</dbReference>
<dbReference type="FunFam" id="1.10.238.10:FF:000058">
    <property type="entry name" value="Calmodulin"/>
    <property type="match status" value="1"/>
</dbReference>
<dbReference type="FunFam" id="1.10.238.10:FF:000257">
    <property type="entry name" value="Calmodulin"/>
    <property type="match status" value="1"/>
</dbReference>
<dbReference type="FunFam" id="1.10.238.10:FF:000027">
    <property type="entry name" value="Calmodulin (CaM)"/>
    <property type="match status" value="1"/>
</dbReference>
<dbReference type="Gene3D" id="1.10.238.10">
    <property type="entry name" value="EF-hand"/>
    <property type="match status" value="3"/>
</dbReference>
<dbReference type="InterPro" id="IPR050230">
    <property type="entry name" value="CALM/Myosin/TropC-like"/>
</dbReference>
<dbReference type="InterPro" id="IPR011992">
    <property type="entry name" value="EF-hand-dom_pair"/>
</dbReference>
<dbReference type="InterPro" id="IPR018247">
    <property type="entry name" value="EF_Hand_1_Ca_BS"/>
</dbReference>
<dbReference type="InterPro" id="IPR002048">
    <property type="entry name" value="EF_hand_dom"/>
</dbReference>
<dbReference type="PANTHER" id="PTHR23048:SF0">
    <property type="entry name" value="CALMODULIN LIKE 3"/>
    <property type="match status" value="1"/>
</dbReference>
<dbReference type="PANTHER" id="PTHR23048">
    <property type="entry name" value="MYOSIN LIGHT CHAIN 1, 3"/>
    <property type="match status" value="1"/>
</dbReference>
<dbReference type="Pfam" id="PF13499">
    <property type="entry name" value="EF-hand_7"/>
    <property type="match status" value="2"/>
</dbReference>
<dbReference type="PRINTS" id="PR00450">
    <property type="entry name" value="RECOVERIN"/>
</dbReference>
<dbReference type="SMART" id="SM00054">
    <property type="entry name" value="EFh"/>
    <property type="match status" value="4"/>
</dbReference>
<dbReference type="SMART" id="SM01184">
    <property type="entry name" value="efhand_Ca_insen"/>
    <property type="match status" value="1"/>
</dbReference>
<dbReference type="SUPFAM" id="SSF47473">
    <property type="entry name" value="EF-hand"/>
    <property type="match status" value="1"/>
</dbReference>
<dbReference type="PROSITE" id="PS00018">
    <property type="entry name" value="EF_HAND_1"/>
    <property type="match status" value="4"/>
</dbReference>
<dbReference type="PROSITE" id="PS50222">
    <property type="entry name" value="EF_HAND_2"/>
    <property type="match status" value="4"/>
</dbReference>
<gene>
    <name type="primary">CAM1</name>
    <name type="ORF">HCBG_07827</name>
</gene>
<proteinExistence type="evidence at transcript level"/>
<comment type="function">
    <text>Calmodulin mediates the control of a large number of enzymes, ion channels and other proteins by Ca(2+). Among the enzymes to be stimulated by the calmodulin-Ca(2+) complex are a number of protein kinases and phosphatases.</text>
</comment>
<comment type="miscellaneous">
    <text>This protein has four functional calcium-binding sites.</text>
</comment>
<comment type="similarity">
    <text evidence="3">Belongs to the calmodulin family.</text>
</comment>
<accession>P60206</accession>
<accession>C0NY33</accession>
<accession>P19533</accession>
<reference key="1">
    <citation type="journal article" date="1996" name="J. Med. Vet. Mycol.">
        <title>Isolation and characterization of a calmodulin-encoding cDNA from the pathogenic fungus Histoplasma capsulatum.</title>
        <authorList>
            <person name="el-Rady J."/>
            <person name="Shearer G. Jr."/>
        </authorList>
    </citation>
    <scope>NUCLEOTIDE SEQUENCE [MRNA]</scope>
</reference>
<reference key="2">
    <citation type="submission" date="1998-06" db="EMBL/GenBank/DDBJ databases">
        <title>Isolation and analysis of the calmodulin gene (CAM1) from the dimorphic fungus Histoplasma capsulatum.</title>
        <authorList>
            <person name="el-Rady J."/>
            <person name="Shearer G. Jr."/>
        </authorList>
    </citation>
    <scope>NUCLEOTIDE SEQUENCE [GENOMIC DNA]</scope>
</reference>
<reference key="3">
    <citation type="submission" date="2009-02" db="EMBL/GenBank/DDBJ databases">
        <title>The genome sequence of Ajellomyces capsulatus strain G186AR.</title>
        <authorList>
            <person name="Champion M."/>
            <person name="Cuomo C.A."/>
            <person name="Ma L.-J."/>
            <person name="Henn M.R."/>
            <person name="Sil A."/>
            <person name="Goldman B."/>
            <person name="Young S.K."/>
            <person name="Kodira C.D."/>
            <person name="Zeng Q."/>
            <person name="Koehrsen M."/>
            <person name="Alvarado L."/>
            <person name="Berlin A."/>
            <person name="Borenstein D."/>
            <person name="Chen Z."/>
            <person name="Engels R."/>
            <person name="Freedman E."/>
            <person name="Gellesch M."/>
            <person name="Goldberg J."/>
            <person name="Griggs A."/>
            <person name="Gujja S."/>
            <person name="Heiman D."/>
            <person name="Hepburn T."/>
            <person name="Howarth C."/>
            <person name="Jen D."/>
            <person name="Larson L."/>
            <person name="Lewis B."/>
            <person name="Mehta T."/>
            <person name="Park D."/>
            <person name="Pearson M."/>
            <person name="Roberts A."/>
            <person name="Saif S."/>
            <person name="Shea T."/>
            <person name="Shenoy N."/>
            <person name="Sisk P."/>
            <person name="Stolte C."/>
            <person name="Sykes S."/>
            <person name="Walk T."/>
            <person name="White J."/>
            <person name="Yandava C."/>
            <person name="Klein B."/>
            <person name="McEwen J.G."/>
            <person name="Puccia R."/>
            <person name="Goldman G.H."/>
            <person name="Felipe M.S."/>
            <person name="Nino-Vega G."/>
            <person name="San-Blas G."/>
            <person name="Taylor J."/>
            <person name="Mendoza L."/>
            <person name="Galagan J.E."/>
            <person name="Nusbaum C."/>
            <person name="Birren B.W."/>
        </authorList>
    </citation>
    <scope>NUCLEOTIDE SEQUENCE [LARGE SCALE GENOMIC DNA]</scope>
    <source>
        <strain>G186AR / H82 / ATCC MYA-2454 / RMSCC 2432</strain>
    </source>
</reference>
<evidence type="ECO:0000250" key="1"/>
<evidence type="ECO:0000255" key="2">
    <source>
        <dbReference type="PROSITE-ProRule" id="PRU00448"/>
    </source>
</evidence>
<evidence type="ECO:0000305" key="3"/>
<feature type="initiator methionine" description="Removed" evidence="1">
    <location>
        <position position="1"/>
    </location>
</feature>
<feature type="chain" id="PRO_0000198312" description="Calmodulin">
    <location>
        <begin position="2"/>
        <end position="149"/>
    </location>
</feature>
<feature type="domain" description="EF-hand 1" evidence="2">
    <location>
        <begin position="8"/>
        <end position="43"/>
    </location>
</feature>
<feature type="domain" description="EF-hand 2" evidence="2">
    <location>
        <begin position="44"/>
        <end position="79"/>
    </location>
</feature>
<feature type="domain" description="EF-hand 3" evidence="2">
    <location>
        <begin position="81"/>
        <end position="116"/>
    </location>
</feature>
<feature type="domain" description="EF-hand 4" evidence="2">
    <location>
        <begin position="117"/>
        <end position="149"/>
    </location>
</feature>
<feature type="binding site" evidence="2">
    <location>
        <position position="21"/>
    </location>
    <ligand>
        <name>Ca(2+)</name>
        <dbReference type="ChEBI" id="CHEBI:29108"/>
        <label>1</label>
    </ligand>
</feature>
<feature type="binding site" evidence="2">
    <location>
        <position position="23"/>
    </location>
    <ligand>
        <name>Ca(2+)</name>
        <dbReference type="ChEBI" id="CHEBI:29108"/>
        <label>1</label>
    </ligand>
</feature>
<feature type="binding site" evidence="2">
    <location>
        <position position="25"/>
    </location>
    <ligand>
        <name>Ca(2+)</name>
        <dbReference type="ChEBI" id="CHEBI:29108"/>
        <label>1</label>
    </ligand>
</feature>
<feature type="binding site" evidence="2">
    <location>
        <position position="27"/>
    </location>
    <ligand>
        <name>Ca(2+)</name>
        <dbReference type="ChEBI" id="CHEBI:29108"/>
        <label>1</label>
    </ligand>
</feature>
<feature type="binding site" evidence="2">
    <location>
        <position position="32"/>
    </location>
    <ligand>
        <name>Ca(2+)</name>
        <dbReference type="ChEBI" id="CHEBI:29108"/>
        <label>1</label>
    </ligand>
</feature>
<feature type="binding site" evidence="2">
    <location>
        <position position="57"/>
    </location>
    <ligand>
        <name>Ca(2+)</name>
        <dbReference type="ChEBI" id="CHEBI:29108"/>
        <label>2</label>
    </ligand>
</feature>
<feature type="binding site" evidence="2">
    <location>
        <position position="59"/>
    </location>
    <ligand>
        <name>Ca(2+)</name>
        <dbReference type="ChEBI" id="CHEBI:29108"/>
        <label>2</label>
    </ligand>
</feature>
<feature type="binding site" evidence="2">
    <location>
        <position position="61"/>
    </location>
    <ligand>
        <name>Ca(2+)</name>
        <dbReference type="ChEBI" id="CHEBI:29108"/>
        <label>2</label>
    </ligand>
</feature>
<feature type="binding site" evidence="2">
    <location>
        <position position="63"/>
    </location>
    <ligand>
        <name>Ca(2+)</name>
        <dbReference type="ChEBI" id="CHEBI:29108"/>
        <label>2</label>
    </ligand>
</feature>
<feature type="binding site" evidence="2">
    <location>
        <position position="68"/>
    </location>
    <ligand>
        <name>Ca(2+)</name>
        <dbReference type="ChEBI" id="CHEBI:29108"/>
        <label>2</label>
    </ligand>
</feature>
<feature type="binding site" evidence="2">
    <location>
        <position position="94"/>
    </location>
    <ligand>
        <name>Ca(2+)</name>
        <dbReference type="ChEBI" id="CHEBI:29108"/>
        <label>3</label>
    </ligand>
</feature>
<feature type="binding site" evidence="2">
    <location>
        <position position="96"/>
    </location>
    <ligand>
        <name>Ca(2+)</name>
        <dbReference type="ChEBI" id="CHEBI:29108"/>
        <label>3</label>
    </ligand>
</feature>
<feature type="binding site" evidence="2">
    <location>
        <position position="98"/>
    </location>
    <ligand>
        <name>Ca(2+)</name>
        <dbReference type="ChEBI" id="CHEBI:29108"/>
        <label>3</label>
    </ligand>
</feature>
<feature type="binding site" evidence="2">
    <location>
        <position position="105"/>
    </location>
    <ligand>
        <name>Ca(2+)</name>
        <dbReference type="ChEBI" id="CHEBI:29108"/>
        <label>3</label>
    </ligand>
</feature>
<feature type="binding site" evidence="2">
    <location>
        <position position="130"/>
    </location>
    <ligand>
        <name>Ca(2+)</name>
        <dbReference type="ChEBI" id="CHEBI:29108"/>
        <label>4</label>
    </ligand>
</feature>
<feature type="binding site" evidence="2">
    <location>
        <position position="132"/>
    </location>
    <ligand>
        <name>Ca(2+)</name>
        <dbReference type="ChEBI" id="CHEBI:29108"/>
        <label>4</label>
    </ligand>
</feature>
<feature type="binding site" evidence="2">
    <location>
        <position position="134"/>
    </location>
    <ligand>
        <name>Ca(2+)</name>
        <dbReference type="ChEBI" id="CHEBI:29108"/>
        <label>4</label>
    </ligand>
</feature>
<feature type="binding site" evidence="2">
    <location>
        <position position="136"/>
    </location>
    <ligand>
        <name>Ca(2+)</name>
        <dbReference type="ChEBI" id="CHEBI:29108"/>
        <label>4</label>
    </ligand>
</feature>
<feature type="binding site" evidence="2">
    <location>
        <position position="141"/>
    </location>
    <ligand>
        <name>Ca(2+)</name>
        <dbReference type="ChEBI" id="CHEBI:29108"/>
        <label>4</label>
    </ligand>
</feature>
<feature type="modified residue" description="N-acetylalanine" evidence="1">
    <location>
        <position position="2"/>
    </location>
</feature>
<sequence>MADSLTEEQVSEYKEAFSLFDKDGDGQITTKELGTVMRSLGQNPSESELQDMINEVDADNNGTIDFPEFLTMMARKMKDTDSEEEIREAFKVFDRDNNGFISAAELRHVMTSIGEKLTDDEVDEMIREADQDGDGRIDYNEFVQLMMQK</sequence>
<organism>
    <name type="scientific">Ajellomyces capsulatus (strain G186AR / H82 / ATCC MYA-2454 / RMSCC 2432)</name>
    <name type="common">Darling's disease fungus</name>
    <name type="synonym">Histoplasma capsulatum</name>
    <dbReference type="NCBI Taxonomy" id="447093"/>
    <lineage>
        <taxon>Eukaryota</taxon>
        <taxon>Fungi</taxon>
        <taxon>Dikarya</taxon>
        <taxon>Ascomycota</taxon>
        <taxon>Pezizomycotina</taxon>
        <taxon>Eurotiomycetes</taxon>
        <taxon>Eurotiomycetidae</taxon>
        <taxon>Onygenales</taxon>
        <taxon>Ajellomycetaceae</taxon>
        <taxon>Histoplasma</taxon>
    </lineage>
</organism>
<protein>
    <recommendedName>
        <fullName>Calmodulin</fullName>
        <shortName>CaM</shortName>
    </recommendedName>
</protein>
<keyword id="KW-0007">Acetylation</keyword>
<keyword id="KW-0106">Calcium</keyword>
<keyword id="KW-0479">Metal-binding</keyword>
<keyword id="KW-1185">Reference proteome</keyword>
<keyword id="KW-0677">Repeat</keyword>